<organism>
    <name type="scientific">Methanococcus aeolicus (strain ATCC BAA-1280 / DSM 17508 / OCM 812 / Nankai-3)</name>
    <dbReference type="NCBI Taxonomy" id="419665"/>
    <lineage>
        <taxon>Archaea</taxon>
        <taxon>Methanobacteriati</taxon>
        <taxon>Methanobacteriota</taxon>
        <taxon>Methanomada group</taxon>
        <taxon>Methanococci</taxon>
        <taxon>Methanococcales</taxon>
        <taxon>Methanococcaceae</taxon>
        <taxon>Methanococcus</taxon>
    </lineage>
</organism>
<feature type="chain" id="PRO_1000040445" description="6,7-dimethyl-8-ribityllumazine synthase">
    <location>
        <begin position="1"/>
        <end position="136"/>
    </location>
</feature>
<feature type="active site" description="Proton donor" evidence="1">
    <location>
        <position position="75"/>
    </location>
</feature>
<feature type="binding site" evidence="1">
    <location>
        <position position="11"/>
    </location>
    <ligand>
        <name>5-amino-6-(D-ribitylamino)uracil</name>
        <dbReference type="ChEBI" id="CHEBI:15934"/>
    </ligand>
</feature>
<feature type="binding site" evidence="1">
    <location>
        <begin position="43"/>
        <end position="45"/>
    </location>
    <ligand>
        <name>5-amino-6-(D-ribitylamino)uracil</name>
        <dbReference type="ChEBI" id="CHEBI:15934"/>
    </ligand>
</feature>
<feature type="binding site" evidence="1">
    <location>
        <begin position="67"/>
        <end position="69"/>
    </location>
    <ligand>
        <name>5-amino-6-(D-ribitylamino)uracil</name>
        <dbReference type="ChEBI" id="CHEBI:15934"/>
    </ligand>
</feature>
<feature type="binding site" evidence="1">
    <location>
        <begin position="72"/>
        <end position="73"/>
    </location>
    <ligand>
        <name>(2S)-2-hydroxy-3-oxobutyl phosphate</name>
        <dbReference type="ChEBI" id="CHEBI:58830"/>
    </ligand>
</feature>
<feature type="binding site" evidence="1">
    <location>
        <position position="100"/>
    </location>
    <ligand>
        <name>5-amino-6-(D-ribitylamino)uracil</name>
        <dbReference type="ChEBI" id="CHEBI:15934"/>
    </ligand>
</feature>
<feature type="binding site" evidence="1">
    <location>
        <position position="115"/>
    </location>
    <ligand>
        <name>(2S)-2-hydroxy-3-oxobutyl phosphate</name>
        <dbReference type="ChEBI" id="CHEBI:58830"/>
    </ligand>
</feature>
<accession>A6UTD8</accession>
<name>RISB_META3</name>
<sequence length="136" mass="15263">MVKLGFVIAEFNRDITFMMEKLADEHAEFLGAEVPYKVMVPGVYDMPVPIKRLLEKEDVDAVITIGCVIEGDTEHDEIVVHNAARKITDLSLQYDKPVALGISGPGMTRMQAERRIDYGRKAVESAVKMVKRLNDL</sequence>
<gene>
    <name evidence="1" type="primary">ribH</name>
    <name type="ordered locus">Maeo_0168</name>
</gene>
<comment type="function">
    <text evidence="1">Catalyzes the formation of 6,7-dimethyl-8-ribityllumazine by condensation of 5-amino-6-(D-ribitylamino)uracil with 3,4-dihydroxy-2-butanone 4-phosphate. This is the penultimate step in the biosynthesis of riboflavin.</text>
</comment>
<comment type="catalytic activity">
    <reaction evidence="1">
        <text>(2S)-2-hydroxy-3-oxobutyl phosphate + 5-amino-6-(D-ribitylamino)uracil = 6,7-dimethyl-8-(1-D-ribityl)lumazine + phosphate + 2 H2O + H(+)</text>
        <dbReference type="Rhea" id="RHEA:26152"/>
        <dbReference type="ChEBI" id="CHEBI:15377"/>
        <dbReference type="ChEBI" id="CHEBI:15378"/>
        <dbReference type="ChEBI" id="CHEBI:15934"/>
        <dbReference type="ChEBI" id="CHEBI:43474"/>
        <dbReference type="ChEBI" id="CHEBI:58201"/>
        <dbReference type="ChEBI" id="CHEBI:58830"/>
        <dbReference type="EC" id="2.5.1.78"/>
    </reaction>
</comment>
<comment type="pathway">
    <text evidence="1">Cofactor biosynthesis; riboflavin biosynthesis; riboflavin from 2-hydroxy-3-oxobutyl phosphate and 5-amino-6-(D-ribitylamino)uracil: step 1/2.</text>
</comment>
<comment type="subunit">
    <text evidence="1">Forms an icosahedral capsid composed of 60 subunits, arranged as a dodecamer of pentamers.</text>
</comment>
<comment type="similarity">
    <text evidence="1">Belongs to the DMRL synthase family.</text>
</comment>
<keyword id="KW-0686">Riboflavin biosynthesis</keyword>
<keyword id="KW-0808">Transferase</keyword>
<dbReference type="EC" id="2.5.1.78" evidence="1"/>
<dbReference type="EMBL" id="CP000743">
    <property type="protein sequence ID" value="ABR55760.1"/>
    <property type="molecule type" value="Genomic_DNA"/>
</dbReference>
<dbReference type="RefSeq" id="WP_011972892.1">
    <property type="nucleotide sequence ID" value="NC_009635.1"/>
</dbReference>
<dbReference type="SMR" id="A6UTD8"/>
<dbReference type="STRING" id="419665.Maeo_0168"/>
<dbReference type="GeneID" id="5326642"/>
<dbReference type="GeneID" id="75305602"/>
<dbReference type="KEGG" id="mae:Maeo_0168"/>
<dbReference type="eggNOG" id="arCOG01323">
    <property type="taxonomic scope" value="Archaea"/>
</dbReference>
<dbReference type="HOGENOM" id="CLU_089358_3_1_2"/>
<dbReference type="OrthoDB" id="7610at2157"/>
<dbReference type="UniPathway" id="UPA00275">
    <property type="reaction ID" value="UER00404"/>
</dbReference>
<dbReference type="Proteomes" id="UP000001106">
    <property type="component" value="Chromosome"/>
</dbReference>
<dbReference type="GO" id="GO:0009349">
    <property type="term" value="C:riboflavin synthase complex"/>
    <property type="evidence" value="ECO:0007669"/>
    <property type="project" value="InterPro"/>
</dbReference>
<dbReference type="GO" id="GO:0000906">
    <property type="term" value="F:6,7-dimethyl-8-ribityllumazine synthase activity"/>
    <property type="evidence" value="ECO:0007669"/>
    <property type="project" value="UniProtKB-UniRule"/>
</dbReference>
<dbReference type="GO" id="GO:0009231">
    <property type="term" value="P:riboflavin biosynthetic process"/>
    <property type="evidence" value="ECO:0007669"/>
    <property type="project" value="UniProtKB-UniRule"/>
</dbReference>
<dbReference type="CDD" id="cd09211">
    <property type="entry name" value="Lumazine_synthase_archaeal"/>
    <property type="match status" value="1"/>
</dbReference>
<dbReference type="FunFam" id="3.40.50.960:FF:000003">
    <property type="entry name" value="6,7-dimethyl-8-ribityllumazine synthase"/>
    <property type="match status" value="1"/>
</dbReference>
<dbReference type="Gene3D" id="3.40.50.960">
    <property type="entry name" value="Lumazine/riboflavin synthase"/>
    <property type="match status" value="1"/>
</dbReference>
<dbReference type="HAMAP" id="MF_00178">
    <property type="entry name" value="Lumazine_synth"/>
    <property type="match status" value="1"/>
</dbReference>
<dbReference type="InterPro" id="IPR034964">
    <property type="entry name" value="LS"/>
</dbReference>
<dbReference type="InterPro" id="IPR002180">
    <property type="entry name" value="LS/RS"/>
</dbReference>
<dbReference type="InterPro" id="IPR036467">
    <property type="entry name" value="LS/RS_sf"/>
</dbReference>
<dbReference type="NCBIfam" id="TIGR00114">
    <property type="entry name" value="lumazine-synth"/>
    <property type="match status" value="1"/>
</dbReference>
<dbReference type="PANTHER" id="PTHR21058:SF0">
    <property type="entry name" value="6,7-DIMETHYL-8-RIBITYLLUMAZINE SYNTHASE"/>
    <property type="match status" value="1"/>
</dbReference>
<dbReference type="PANTHER" id="PTHR21058">
    <property type="entry name" value="6,7-DIMETHYL-8-RIBITYLLUMAZINE SYNTHASE DMRL SYNTHASE LUMAZINE SYNTHASE"/>
    <property type="match status" value="1"/>
</dbReference>
<dbReference type="Pfam" id="PF00885">
    <property type="entry name" value="DMRL_synthase"/>
    <property type="match status" value="1"/>
</dbReference>
<dbReference type="SUPFAM" id="SSF52121">
    <property type="entry name" value="Lumazine synthase"/>
    <property type="match status" value="1"/>
</dbReference>
<evidence type="ECO:0000255" key="1">
    <source>
        <dbReference type="HAMAP-Rule" id="MF_00178"/>
    </source>
</evidence>
<reference key="1">
    <citation type="submission" date="2007-06" db="EMBL/GenBank/DDBJ databases">
        <title>Complete sequence of Methanococcus aeolicus Nankai-3.</title>
        <authorList>
            <consortium name="US DOE Joint Genome Institute"/>
            <person name="Copeland A."/>
            <person name="Lucas S."/>
            <person name="Lapidus A."/>
            <person name="Barry K."/>
            <person name="Glavina del Rio T."/>
            <person name="Dalin E."/>
            <person name="Tice H."/>
            <person name="Pitluck S."/>
            <person name="Chain P."/>
            <person name="Malfatti S."/>
            <person name="Shin M."/>
            <person name="Vergez L."/>
            <person name="Schmutz J."/>
            <person name="Larimer F."/>
            <person name="Land M."/>
            <person name="Hauser L."/>
            <person name="Kyrpides N."/>
            <person name="Lykidis A."/>
            <person name="Sieprawska-Lupa M."/>
            <person name="Whitman W.B."/>
            <person name="Richardson P."/>
        </authorList>
    </citation>
    <scope>NUCLEOTIDE SEQUENCE [LARGE SCALE GENOMIC DNA]</scope>
    <source>
        <strain>ATCC BAA-1280 / DSM 17508 / OCM 812 / Nankai-3</strain>
    </source>
</reference>
<proteinExistence type="inferred from homology"/>
<protein>
    <recommendedName>
        <fullName evidence="1">6,7-dimethyl-8-ribityllumazine synthase</fullName>
        <shortName evidence="1">DMRL synthase</shortName>
        <shortName evidence="1">LS</shortName>
        <shortName evidence="1">Lumazine synthase</shortName>
        <ecNumber evidence="1">2.5.1.78</ecNumber>
    </recommendedName>
</protein>